<gene>
    <name type="primary">Atpalpha</name>
    <name type="synonym">Na-p</name>
    <name type="ORF">CG5670</name>
</gene>
<accession>P13607</accession>
<accession>A4V366</accession>
<accession>A4V367</accession>
<accession>O61494</accession>
<accession>Q0KI37</accession>
<accession>Q7KS94</accession>
<accession>Q7KS95</accession>
<accession>Q86MY6</accession>
<accession>Q86MY7</accession>
<accession>Q86MY8</accession>
<accession>Q86MY9</accession>
<accession>Q86MZ0</accession>
<accession>Q8IN40</accession>
<accession>Q8T0L8</accession>
<accession>Q9VDG6</accession>
<accession>Q9VDG7</accession>
<accession>Q9VDG8</accession>
<protein>
    <recommendedName>
        <fullName>Sodium/potassium-transporting ATPase subunit alpha</fullName>
        <shortName>Na(+)/K(+) ATPase alpha subunit</shortName>
        <ecNumber evidence="11">7.2.2.13</ecNumber>
    </recommendedName>
    <alternativeName>
        <fullName>Sodium pump subunit alpha</fullName>
    </alternativeName>
</protein>
<reference key="1">
    <citation type="journal article" date="1989" name="EMBO J.">
        <title>Molecular characterization and expression of the (Na+ + K+)-ATPase alpha-subunit in Drosophila melanogaster.</title>
        <authorList>
            <person name="Lebovitz R.M."/>
            <person name="Takeyasu K."/>
            <person name="Fambrough D.M."/>
        </authorList>
    </citation>
    <scope>NUCLEOTIDE SEQUENCE [MRNA] (ISOFORM 1)</scope>
    <scope>FUNCTION</scope>
    <scope>TISSUE SPECIFICITY</scope>
    <source>
        <strain>Canton-S</strain>
        <strain>Oregon-R</strain>
        <tissue>Embryo</tissue>
        <tissue>Head</tissue>
        <tissue>Pupae</tissue>
    </source>
</reference>
<reference key="2">
    <citation type="journal article" date="1998" name="J. Neurochem.">
        <title>Functional analysis and tissue-specific expression of Drosophila Na+,K+-ATPase subunits.</title>
        <authorList>
            <person name="Sun B."/>
            <person name="Wang W."/>
            <person name="Salvaterra P.M."/>
        </authorList>
    </citation>
    <scope>NUCLEOTIDE SEQUENCE [MRNA] (ISOFORM 2)</scope>
    <scope>FUNCTION</scope>
    <scope>CATALYTIC ACTIVITY</scope>
    <scope>TISSUE SPECIFICITY</scope>
    <source>
        <tissue>Head</tissue>
    </source>
</reference>
<reference key="3">
    <citation type="journal article" date="2000" name="Science">
        <title>The genome sequence of Drosophila melanogaster.</title>
        <authorList>
            <person name="Adams M.D."/>
            <person name="Celniker S.E."/>
            <person name="Holt R.A."/>
            <person name="Evans C.A."/>
            <person name="Gocayne J.D."/>
            <person name="Amanatides P.G."/>
            <person name="Scherer S.E."/>
            <person name="Li P.W."/>
            <person name="Hoskins R.A."/>
            <person name="Galle R.F."/>
            <person name="George R.A."/>
            <person name="Lewis S.E."/>
            <person name="Richards S."/>
            <person name="Ashburner M."/>
            <person name="Henderson S.N."/>
            <person name="Sutton G.G."/>
            <person name="Wortman J.R."/>
            <person name="Yandell M.D."/>
            <person name="Zhang Q."/>
            <person name="Chen L.X."/>
            <person name="Brandon R.C."/>
            <person name="Rogers Y.-H.C."/>
            <person name="Blazej R.G."/>
            <person name="Champe M."/>
            <person name="Pfeiffer B.D."/>
            <person name="Wan K.H."/>
            <person name="Doyle C."/>
            <person name="Baxter E.G."/>
            <person name="Helt G."/>
            <person name="Nelson C.R."/>
            <person name="Miklos G.L.G."/>
            <person name="Abril J.F."/>
            <person name="Agbayani A."/>
            <person name="An H.-J."/>
            <person name="Andrews-Pfannkoch C."/>
            <person name="Baldwin D."/>
            <person name="Ballew R.M."/>
            <person name="Basu A."/>
            <person name="Baxendale J."/>
            <person name="Bayraktaroglu L."/>
            <person name="Beasley E.M."/>
            <person name="Beeson K.Y."/>
            <person name="Benos P.V."/>
            <person name="Berman B.P."/>
            <person name="Bhandari D."/>
            <person name="Bolshakov S."/>
            <person name="Borkova D."/>
            <person name="Botchan M.R."/>
            <person name="Bouck J."/>
            <person name="Brokstein P."/>
            <person name="Brottier P."/>
            <person name="Burtis K.C."/>
            <person name="Busam D.A."/>
            <person name="Butler H."/>
            <person name="Cadieu E."/>
            <person name="Center A."/>
            <person name="Chandra I."/>
            <person name="Cherry J.M."/>
            <person name="Cawley S."/>
            <person name="Dahlke C."/>
            <person name="Davenport L.B."/>
            <person name="Davies P."/>
            <person name="de Pablos B."/>
            <person name="Delcher A."/>
            <person name="Deng Z."/>
            <person name="Mays A.D."/>
            <person name="Dew I."/>
            <person name="Dietz S.M."/>
            <person name="Dodson K."/>
            <person name="Doup L.E."/>
            <person name="Downes M."/>
            <person name="Dugan-Rocha S."/>
            <person name="Dunkov B.C."/>
            <person name="Dunn P."/>
            <person name="Durbin K.J."/>
            <person name="Evangelista C.C."/>
            <person name="Ferraz C."/>
            <person name="Ferriera S."/>
            <person name="Fleischmann W."/>
            <person name="Fosler C."/>
            <person name="Gabrielian A.E."/>
            <person name="Garg N.S."/>
            <person name="Gelbart W.M."/>
            <person name="Glasser K."/>
            <person name="Glodek A."/>
            <person name="Gong F."/>
            <person name="Gorrell J.H."/>
            <person name="Gu Z."/>
            <person name="Guan P."/>
            <person name="Harris M."/>
            <person name="Harris N.L."/>
            <person name="Harvey D.A."/>
            <person name="Heiman T.J."/>
            <person name="Hernandez J.R."/>
            <person name="Houck J."/>
            <person name="Hostin D."/>
            <person name="Houston K.A."/>
            <person name="Howland T.J."/>
            <person name="Wei M.-H."/>
            <person name="Ibegwam C."/>
            <person name="Jalali M."/>
            <person name="Kalush F."/>
            <person name="Karpen G.H."/>
            <person name="Ke Z."/>
            <person name="Kennison J.A."/>
            <person name="Ketchum K.A."/>
            <person name="Kimmel B.E."/>
            <person name="Kodira C.D."/>
            <person name="Kraft C.L."/>
            <person name="Kravitz S."/>
            <person name="Kulp D."/>
            <person name="Lai Z."/>
            <person name="Lasko P."/>
            <person name="Lei Y."/>
            <person name="Levitsky A.A."/>
            <person name="Li J.H."/>
            <person name="Li Z."/>
            <person name="Liang Y."/>
            <person name="Lin X."/>
            <person name="Liu X."/>
            <person name="Mattei B."/>
            <person name="McIntosh T.C."/>
            <person name="McLeod M.P."/>
            <person name="McPherson D."/>
            <person name="Merkulov G."/>
            <person name="Milshina N.V."/>
            <person name="Mobarry C."/>
            <person name="Morris J."/>
            <person name="Moshrefi A."/>
            <person name="Mount S.M."/>
            <person name="Moy M."/>
            <person name="Murphy B."/>
            <person name="Murphy L."/>
            <person name="Muzny D.M."/>
            <person name="Nelson D.L."/>
            <person name="Nelson D.R."/>
            <person name="Nelson K.A."/>
            <person name="Nixon K."/>
            <person name="Nusskern D.R."/>
            <person name="Pacleb J.M."/>
            <person name="Palazzolo M."/>
            <person name="Pittman G.S."/>
            <person name="Pan S."/>
            <person name="Pollard J."/>
            <person name="Puri V."/>
            <person name="Reese M.G."/>
            <person name="Reinert K."/>
            <person name="Remington K."/>
            <person name="Saunders R.D.C."/>
            <person name="Scheeler F."/>
            <person name="Shen H."/>
            <person name="Shue B.C."/>
            <person name="Siden-Kiamos I."/>
            <person name="Simpson M."/>
            <person name="Skupski M.P."/>
            <person name="Smith T.J."/>
            <person name="Spier E."/>
            <person name="Spradling A.C."/>
            <person name="Stapleton M."/>
            <person name="Strong R."/>
            <person name="Sun E."/>
            <person name="Svirskas R."/>
            <person name="Tector C."/>
            <person name="Turner R."/>
            <person name="Venter E."/>
            <person name="Wang A.H."/>
            <person name="Wang X."/>
            <person name="Wang Z.-Y."/>
            <person name="Wassarman D.A."/>
            <person name="Weinstock G.M."/>
            <person name="Weissenbach J."/>
            <person name="Williams S.M."/>
            <person name="Woodage T."/>
            <person name="Worley K.C."/>
            <person name="Wu D."/>
            <person name="Yang S."/>
            <person name="Yao Q.A."/>
            <person name="Ye J."/>
            <person name="Yeh R.-F."/>
            <person name="Zaveri J.S."/>
            <person name="Zhan M."/>
            <person name="Zhang G."/>
            <person name="Zhao Q."/>
            <person name="Zheng L."/>
            <person name="Zheng X.H."/>
            <person name="Zhong F.N."/>
            <person name="Zhong W."/>
            <person name="Zhou X."/>
            <person name="Zhu S.C."/>
            <person name="Zhu X."/>
            <person name="Smith H.O."/>
            <person name="Gibbs R.A."/>
            <person name="Myers E.W."/>
            <person name="Rubin G.M."/>
            <person name="Venter J.C."/>
        </authorList>
    </citation>
    <scope>NUCLEOTIDE SEQUENCE [LARGE SCALE GENOMIC DNA]</scope>
    <source>
        <strain>Berkeley</strain>
    </source>
</reference>
<reference key="4">
    <citation type="journal article" date="2002" name="Genome Biol.">
        <title>Annotation of the Drosophila melanogaster euchromatic genome: a systematic review.</title>
        <authorList>
            <person name="Misra S."/>
            <person name="Crosby M.A."/>
            <person name="Mungall C.J."/>
            <person name="Matthews B.B."/>
            <person name="Campbell K.S."/>
            <person name="Hradecky P."/>
            <person name="Huang Y."/>
            <person name="Kaminker J.S."/>
            <person name="Millburn G.H."/>
            <person name="Prochnik S.E."/>
            <person name="Smith C.D."/>
            <person name="Tupy J.L."/>
            <person name="Whitfield E.J."/>
            <person name="Bayraktaroglu L."/>
            <person name="Berman B.P."/>
            <person name="Bettencourt B.R."/>
            <person name="Celniker S.E."/>
            <person name="de Grey A.D.N.J."/>
            <person name="Drysdale R.A."/>
            <person name="Harris N.L."/>
            <person name="Richter J."/>
            <person name="Russo S."/>
            <person name="Schroeder A.J."/>
            <person name="Shu S.Q."/>
            <person name="Stapleton M."/>
            <person name="Yamada C."/>
            <person name="Ashburner M."/>
            <person name="Gelbart W.M."/>
            <person name="Rubin G.M."/>
            <person name="Lewis S.E."/>
        </authorList>
    </citation>
    <scope>GENOME REANNOTATION</scope>
    <scope>ALTERNATIVE SPLICING</scope>
    <source>
        <strain>Berkeley</strain>
    </source>
</reference>
<reference key="5">
    <citation type="journal article" date="2002" name="Genome Biol.">
        <title>A Drosophila full-length cDNA resource.</title>
        <authorList>
            <person name="Stapleton M."/>
            <person name="Carlson J.W."/>
            <person name="Brokstein P."/>
            <person name="Yu C."/>
            <person name="Champe M."/>
            <person name="George R.A."/>
            <person name="Guarin H."/>
            <person name="Kronmiller B."/>
            <person name="Pacleb J.M."/>
            <person name="Park S."/>
            <person name="Wan K.H."/>
            <person name="Rubin G.M."/>
            <person name="Celniker S.E."/>
        </authorList>
    </citation>
    <scope>NUCLEOTIDE SEQUENCE [LARGE SCALE MRNA] (ISOFORM 3)</scope>
    <scope>RNA EDITING OF POSITION 429</scope>
    <source>
        <strain>Berkeley</strain>
        <tissue>Head</tissue>
    </source>
</reference>
<reference key="6">
    <citation type="journal article" date="2003" name="J. Neurosci.">
        <title>Neural dysfunction and neurodegeneration in Drosophila Na+/K+ ATPase alpha subunit mutants.</title>
        <authorList>
            <person name="Palladino M.J."/>
            <person name="Bower J.E."/>
            <person name="Kreber R."/>
            <person name="Ganetzky B."/>
        </authorList>
    </citation>
    <scope>NUCLEOTIDE SEQUENCE [GENOMIC DNA] OF 1-35 (ISOFORM 4)</scope>
    <scope>NUCLEOTIDE SEQUENCE [GENOMIC DNA] OF 835-865 (ISOFORMS 1; 5; 6 AND 7)</scope>
    <scope>FUNCTION</scope>
    <scope>MUTAGENESIS OF ASP-1020 AND GLU-1021</scope>
</reference>
<reference key="7">
    <citation type="journal article" date="1997" name="Genes Funct.">
        <title>The Drosophila Na,K-ATPase alpha-subunit gene: gene structure, promoter function and analysis of a cold-sensitive recessive-lethal mutation.</title>
        <authorList>
            <person name="Feng Y."/>
            <person name="Huynh L."/>
            <person name="Takeyasu K."/>
            <person name="Fambrough D.M."/>
        </authorList>
    </citation>
    <scope>NUCLEOTIDE SEQUENCE [GENOMIC DNA] OF 1-8</scope>
</reference>
<reference key="8">
    <citation type="journal article" date="1989" name="FEBS Lett.">
        <title>Amplification of the phosphorylation site-ATP-binding site cDNA fragment of the Na+,K(+)-ATPase and the Ca2(+)-ATPase of Drosophila melanogaster by polymerase chain reaction.</title>
        <authorList>
            <person name="Varadi A."/>
            <person name="Gilmore-Heber M."/>
            <person name="Benz E.J. Jr."/>
        </authorList>
    </citation>
    <scope>NUCLEOTIDE SEQUENCE [MRNA] OF 400-524</scope>
</reference>
<reference key="9">
    <citation type="journal article" date="2006" name="RNA">
        <title>RNA editing in Drosophila melanogaster: new targets and functional consequences.</title>
        <authorList>
            <person name="Stapleton M."/>
            <person name="Carlson J.W."/>
            <person name="Celniker S.E."/>
        </authorList>
    </citation>
    <scope>RNA EDITING OF POSITION 429</scope>
</reference>
<dbReference type="EC" id="7.2.2.13" evidence="11"/>
<dbReference type="EMBL" id="X14476">
    <property type="protein sequence ID" value="CAA32638.1"/>
    <property type="molecule type" value="mRNA"/>
</dbReference>
<dbReference type="EMBL" id="AF044974">
    <property type="protein sequence ID" value="AAC05260.1"/>
    <property type="molecule type" value="mRNA"/>
</dbReference>
<dbReference type="EMBL" id="AE014297">
    <property type="protein sequence ID" value="AAF55825.3"/>
    <property type="molecule type" value="Genomic_DNA"/>
</dbReference>
<dbReference type="EMBL" id="AE014297">
    <property type="protein sequence ID" value="AAF55826.2"/>
    <property type="molecule type" value="Genomic_DNA"/>
</dbReference>
<dbReference type="EMBL" id="AE014297">
    <property type="protein sequence ID" value="AAF55828.1"/>
    <property type="molecule type" value="Genomic_DNA"/>
</dbReference>
<dbReference type="EMBL" id="AE014297">
    <property type="protein sequence ID" value="AAS65183.1"/>
    <property type="molecule type" value="Genomic_DNA"/>
</dbReference>
<dbReference type="EMBL" id="AE014297">
    <property type="protein sequence ID" value="AAS65184.1"/>
    <property type="molecule type" value="Genomic_DNA"/>
</dbReference>
<dbReference type="EMBL" id="AE014297">
    <property type="protein sequence ID" value="AAS65185.1"/>
    <property type="molecule type" value="Genomic_DNA"/>
</dbReference>
<dbReference type="EMBL" id="AE014297">
    <property type="protein sequence ID" value="AAS65186.1"/>
    <property type="molecule type" value="Genomic_DNA"/>
</dbReference>
<dbReference type="EMBL" id="AY069184">
    <property type="protein sequence ID" value="AAL39329.1"/>
    <property type="molecule type" value="mRNA"/>
</dbReference>
<dbReference type="EMBL" id="AY174097">
    <property type="protein sequence ID" value="AAO33930.1"/>
    <property type="molecule type" value="Genomic_DNA"/>
</dbReference>
<dbReference type="EMBL" id="AY174097">
    <property type="protein sequence ID" value="AAO33931.1"/>
    <property type="molecule type" value="Genomic_DNA"/>
</dbReference>
<dbReference type="EMBL" id="AY174097">
    <property type="protein sequence ID" value="AAO33932.1"/>
    <property type="molecule type" value="Genomic_DNA"/>
</dbReference>
<dbReference type="EMBL" id="AY174097">
    <property type="protein sequence ID" value="AAO33933.1"/>
    <property type="molecule type" value="Genomic_DNA"/>
</dbReference>
<dbReference type="EMBL" id="AY174098">
    <property type="protein sequence ID" value="AAO33929.1"/>
    <property type="molecule type" value="Genomic_DNA"/>
</dbReference>
<dbReference type="EMBL" id="U55767">
    <property type="protein sequence ID" value="AAB01189.1"/>
    <property type="molecule type" value="Genomic_DNA"/>
</dbReference>
<dbReference type="EMBL" id="X17471">
    <property type="protein sequence ID" value="CAA35504.1"/>
    <property type="molecule type" value="mRNA"/>
</dbReference>
<dbReference type="PIR" id="S03632">
    <property type="entry name" value="S03632"/>
</dbReference>
<dbReference type="RefSeq" id="NP_001262790.1">
    <molecule id="P13607-2"/>
    <property type="nucleotide sequence ID" value="NM_001275861.1"/>
</dbReference>
<dbReference type="RefSeq" id="NP_001262791.1">
    <molecule id="P13607-2"/>
    <property type="nucleotide sequence ID" value="NM_001275862.2"/>
</dbReference>
<dbReference type="RefSeq" id="NP_732572.1">
    <molecule id="P13607-1"/>
    <property type="nucleotide sequence ID" value="NM_169936.3"/>
</dbReference>
<dbReference type="RefSeq" id="NP_732573.1">
    <molecule id="P13607-2"/>
    <property type="nucleotide sequence ID" value="NM_169937.3"/>
</dbReference>
<dbReference type="RefSeq" id="NP_732574.1">
    <molecule id="P13607-2"/>
    <property type="nucleotide sequence ID" value="NM_169938.3"/>
</dbReference>
<dbReference type="RefSeq" id="NP_732575.1">
    <molecule id="P13607-3"/>
    <property type="nucleotide sequence ID" value="NM_169939.2"/>
</dbReference>
<dbReference type="RefSeq" id="NP_996247.1">
    <molecule id="P13607-6"/>
    <property type="nucleotide sequence ID" value="NM_206525.3"/>
</dbReference>
<dbReference type="RefSeq" id="NP_996248.1">
    <molecule id="P13607-7"/>
    <property type="nucleotide sequence ID" value="NM_206526.3"/>
</dbReference>
<dbReference type="RefSeq" id="NP_996249.1">
    <molecule id="P13607-6"/>
    <property type="nucleotide sequence ID" value="NM_206527.3"/>
</dbReference>
<dbReference type="RefSeq" id="NP_996250.1">
    <molecule id="P13607-2"/>
    <property type="nucleotide sequence ID" value="NM_206528.3"/>
</dbReference>
<dbReference type="SMR" id="P13607"/>
<dbReference type="BioGRID" id="71866">
    <property type="interactions" value="61"/>
</dbReference>
<dbReference type="DIP" id="DIP-19649N"/>
<dbReference type="FunCoup" id="P13607">
    <property type="interactions" value="602"/>
</dbReference>
<dbReference type="IntAct" id="P13607">
    <property type="interactions" value="114"/>
</dbReference>
<dbReference type="STRING" id="7227.FBpp0088502"/>
<dbReference type="TCDB" id="1.H.2.1.1">
    <property type="family name" value="the invertebrate pmp22-claudin (claudin2) family"/>
</dbReference>
<dbReference type="GlyGen" id="P13607">
    <property type="glycosylation" value="2 sites, 1 O-linked glycan (2 sites)"/>
</dbReference>
<dbReference type="PaxDb" id="7227-FBpp0088502"/>
<dbReference type="DNASU" id="48971"/>
<dbReference type="EnsemblMetazoa" id="FBtr0089509">
    <molecule id="P13607-2"/>
    <property type="protein sequence ID" value="FBpp0088501"/>
    <property type="gene ID" value="FBgn0002921"/>
</dbReference>
<dbReference type="EnsemblMetazoa" id="FBtr0089510">
    <molecule id="P13607-1"/>
    <property type="protein sequence ID" value="FBpp0088502"/>
    <property type="gene ID" value="FBgn0002921"/>
</dbReference>
<dbReference type="EnsemblMetazoa" id="FBtr0089511">
    <molecule id="P13607-2"/>
    <property type="protein sequence ID" value="FBpp0088503"/>
    <property type="gene ID" value="FBgn0002921"/>
</dbReference>
<dbReference type="EnsemblMetazoa" id="FBtr0089512">
    <molecule id="P13607-3"/>
    <property type="protein sequence ID" value="FBpp0088504"/>
    <property type="gene ID" value="FBgn0002921"/>
</dbReference>
<dbReference type="EnsemblMetazoa" id="FBtr0089513">
    <molecule id="P13607-2"/>
    <property type="protein sequence ID" value="FBpp0088984"/>
    <property type="gene ID" value="FBgn0002921"/>
</dbReference>
<dbReference type="EnsemblMetazoa" id="FBtr0089514">
    <molecule id="P13607-6"/>
    <property type="protein sequence ID" value="FBpp0088983"/>
    <property type="gene ID" value="FBgn0002921"/>
</dbReference>
<dbReference type="EnsemblMetazoa" id="FBtr0089515">
    <molecule id="P13607-7"/>
    <property type="protein sequence ID" value="FBpp0088982"/>
    <property type="gene ID" value="FBgn0002921"/>
</dbReference>
<dbReference type="EnsemblMetazoa" id="FBtr0089516">
    <molecule id="P13607-6"/>
    <property type="protein sequence ID" value="FBpp0088981"/>
    <property type="gene ID" value="FBgn0002921"/>
</dbReference>
<dbReference type="EnsemblMetazoa" id="FBtr0333324">
    <molecule id="P13607-2"/>
    <property type="protein sequence ID" value="FBpp0305516"/>
    <property type="gene ID" value="FBgn0002921"/>
</dbReference>
<dbReference type="EnsemblMetazoa" id="FBtr0333325">
    <molecule id="P13607-2"/>
    <property type="protein sequence ID" value="FBpp0305517"/>
    <property type="gene ID" value="FBgn0002921"/>
</dbReference>
<dbReference type="GeneID" id="48971"/>
<dbReference type="KEGG" id="dme:Dmel_CG5670"/>
<dbReference type="UCSC" id="CG5670-RE">
    <property type="organism name" value="d. melanogaster"/>
</dbReference>
<dbReference type="UCSC" id="CG5670-RH">
    <property type="organism name" value="d. melanogaster"/>
</dbReference>
<dbReference type="AGR" id="FB:FBgn0002921"/>
<dbReference type="CTD" id="48971"/>
<dbReference type="FlyBase" id="FBgn0002921">
    <property type="gene designation" value="Atpalpha"/>
</dbReference>
<dbReference type="VEuPathDB" id="VectorBase:FBgn0002921"/>
<dbReference type="eggNOG" id="KOG0203">
    <property type="taxonomic scope" value="Eukaryota"/>
</dbReference>
<dbReference type="InParanoid" id="P13607"/>
<dbReference type="OMA" id="QQPPIFN"/>
<dbReference type="OrthoDB" id="158672at2759"/>
<dbReference type="PhylomeDB" id="P13607"/>
<dbReference type="SignaLink" id="P13607"/>
<dbReference type="BioGRID-ORCS" id="48971">
    <property type="hits" value="1 hit in 3 CRISPR screens"/>
</dbReference>
<dbReference type="ChiTaRS" id="Atpalpha">
    <property type="organism name" value="fly"/>
</dbReference>
<dbReference type="GenomeRNAi" id="48971"/>
<dbReference type="PRO" id="PR:P13607"/>
<dbReference type="Proteomes" id="UP000000803">
    <property type="component" value="Chromosome 3R"/>
</dbReference>
<dbReference type="Bgee" id="FBgn0002921">
    <property type="expression patterns" value="Expressed in transmedullary neuron Tm2 (Drosophila) in insect head and 295 other cell types or tissues"/>
</dbReference>
<dbReference type="ExpressionAtlas" id="P13607">
    <property type="expression patterns" value="baseline and differential"/>
</dbReference>
<dbReference type="GO" id="GO:0016323">
    <property type="term" value="C:basolateral plasma membrane"/>
    <property type="evidence" value="ECO:0000314"/>
    <property type="project" value="FlyBase"/>
</dbReference>
<dbReference type="GO" id="GO:0005737">
    <property type="term" value="C:cytoplasm"/>
    <property type="evidence" value="ECO:0007005"/>
    <property type="project" value="FlyBase"/>
</dbReference>
<dbReference type="GO" id="GO:0005634">
    <property type="term" value="C:nucleus"/>
    <property type="evidence" value="ECO:0000314"/>
    <property type="project" value="FlyBase"/>
</dbReference>
<dbReference type="GO" id="GO:0005886">
    <property type="term" value="C:plasma membrane"/>
    <property type="evidence" value="ECO:0000314"/>
    <property type="project" value="FlyBase"/>
</dbReference>
<dbReference type="GO" id="GO:0005918">
    <property type="term" value="C:septate junction"/>
    <property type="evidence" value="ECO:0000314"/>
    <property type="project" value="FlyBase"/>
</dbReference>
<dbReference type="GO" id="GO:0005890">
    <property type="term" value="C:sodium:potassium-exchanging ATPase complex"/>
    <property type="evidence" value="ECO:0000314"/>
    <property type="project" value="FlyBase"/>
</dbReference>
<dbReference type="GO" id="GO:0045202">
    <property type="term" value="C:synapse"/>
    <property type="evidence" value="ECO:0007669"/>
    <property type="project" value="GOC"/>
</dbReference>
<dbReference type="GO" id="GO:0005524">
    <property type="term" value="F:ATP binding"/>
    <property type="evidence" value="ECO:0007669"/>
    <property type="project" value="UniProtKB-KW"/>
</dbReference>
<dbReference type="GO" id="GO:0016887">
    <property type="term" value="F:ATP hydrolysis activity"/>
    <property type="evidence" value="ECO:0007669"/>
    <property type="project" value="InterPro"/>
</dbReference>
<dbReference type="GO" id="GO:0005391">
    <property type="term" value="F:P-type sodium:potassium-exchanging transporter activity"/>
    <property type="evidence" value="ECO:0000314"/>
    <property type="project" value="FlyBase"/>
</dbReference>
<dbReference type="GO" id="GO:0008344">
    <property type="term" value="P:adult locomotory behavior"/>
    <property type="evidence" value="ECO:0000315"/>
    <property type="project" value="FlyBase"/>
</dbReference>
<dbReference type="GO" id="GO:0007268">
    <property type="term" value="P:chemical synaptic transmission"/>
    <property type="evidence" value="ECO:0000314"/>
    <property type="project" value="FlyBase"/>
</dbReference>
<dbReference type="GO" id="GO:0008340">
    <property type="term" value="P:determination of adult lifespan"/>
    <property type="evidence" value="ECO:0000315"/>
    <property type="project" value="FlyBase"/>
</dbReference>
<dbReference type="GO" id="GO:0030007">
    <property type="term" value="P:intracellular potassium ion homeostasis"/>
    <property type="evidence" value="ECO:0000318"/>
    <property type="project" value="GO_Central"/>
</dbReference>
<dbReference type="GO" id="GO:0006883">
    <property type="term" value="P:intracellular sodium ion homeostasis"/>
    <property type="evidence" value="ECO:0000318"/>
    <property type="project" value="GO_Central"/>
</dbReference>
<dbReference type="GO" id="GO:0007630">
    <property type="term" value="P:jump response"/>
    <property type="evidence" value="ECO:0000315"/>
    <property type="project" value="FlyBase"/>
</dbReference>
<dbReference type="GO" id="GO:0007626">
    <property type="term" value="P:locomotory behavior"/>
    <property type="evidence" value="ECO:0000315"/>
    <property type="project" value="FlyBase"/>
</dbReference>
<dbReference type="GO" id="GO:0006812">
    <property type="term" value="P:monoatomic cation transport"/>
    <property type="evidence" value="ECO:0000314"/>
    <property type="project" value="FlyBase"/>
</dbReference>
<dbReference type="GO" id="GO:0050905">
    <property type="term" value="P:neuromuscular process"/>
    <property type="evidence" value="ECO:0000315"/>
    <property type="project" value="FlyBase"/>
</dbReference>
<dbReference type="GO" id="GO:1990573">
    <property type="term" value="P:potassium ion import across plasma membrane"/>
    <property type="evidence" value="ECO:0000318"/>
    <property type="project" value="GO_Central"/>
</dbReference>
<dbReference type="GO" id="GO:1902600">
    <property type="term" value="P:proton transmembrane transport"/>
    <property type="evidence" value="ECO:0000318"/>
    <property type="project" value="GO_Central"/>
</dbReference>
<dbReference type="GO" id="GO:0035158">
    <property type="term" value="P:regulation of tube diameter, open tracheal system"/>
    <property type="evidence" value="ECO:0000315"/>
    <property type="project" value="FlyBase"/>
</dbReference>
<dbReference type="GO" id="GO:0035159">
    <property type="term" value="P:regulation of tube length, open tracheal system"/>
    <property type="evidence" value="ECO:0000315"/>
    <property type="project" value="FlyBase"/>
</dbReference>
<dbReference type="GO" id="GO:0009612">
    <property type="term" value="P:response to mechanical stimulus"/>
    <property type="evidence" value="ECO:0000315"/>
    <property type="project" value="FlyBase"/>
</dbReference>
<dbReference type="GO" id="GO:0009266">
    <property type="term" value="P:response to temperature stimulus"/>
    <property type="evidence" value="ECO:0000315"/>
    <property type="project" value="FlyBase"/>
</dbReference>
<dbReference type="GO" id="GO:0007605">
    <property type="term" value="P:sensory perception of sound"/>
    <property type="evidence" value="ECO:0000315"/>
    <property type="project" value="FlyBase"/>
</dbReference>
<dbReference type="GO" id="GO:0019991">
    <property type="term" value="P:septate junction assembly"/>
    <property type="evidence" value="ECO:0000315"/>
    <property type="project" value="FlyBase"/>
</dbReference>
<dbReference type="GO" id="GO:0036376">
    <property type="term" value="P:sodium ion export across plasma membrane"/>
    <property type="evidence" value="ECO:0000318"/>
    <property type="project" value="GO_Central"/>
</dbReference>
<dbReference type="GO" id="GO:0051124">
    <property type="term" value="P:synaptic assembly at neuromuscular junction"/>
    <property type="evidence" value="ECO:0000315"/>
    <property type="project" value="FlyBase"/>
</dbReference>
<dbReference type="GO" id="GO:0001894">
    <property type="term" value="P:tissue homeostasis"/>
    <property type="evidence" value="ECO:0000315"/>
    <property type="project" value="FlyBase"/>
</dbReference>
<dbReference type="GO" id="GO:0060439">
    <property type="term" value="P:trachea morphogenesis"/>
    <property type="evidence" value="ECO:0000315"/>
    <property type="project" value="FlyBase"/>
</dbReference>
<dbReference type="CDD" id="cd02608">
    <property type="entry name" value="P-type_ATPase_Na-K_like"/>
    <property type="match status" value="1"/>
</dbReference>
<dbReference type="FunFam" id="1.20.1110.10:FF:000038">
    <property type="entry name" value="Sodium/potassium-transporting ATPase subunit alpha"/>
    <property type="match status" value="1"/>
</dbReference>
<dbReference type="FunFam" id="2.70.150.10:FF:000003">
    <property type="entry name" value="Sodium/potassium-transporting ATPase subunit alpha"/>
    <property type="match status" value="1"/>
</dbReference>
<dbReference type="FunFam" id="3.40.1110.10:FF:000001">
    <property type="entry name" value="Sodium/potassium-transporting ATPase subunit alpha"/>
    <property type="match status" value="1"/>
</dbReference>
<dbReference type="FunFam" id="3.40.50.1000:FF:000004">
    <property type="entry name" value="Sodium/potassium-transporting ATPase subunit alpha"/>
    <property type="match status" value="1"/>
</dbReference>
<dbReference type="FunFam" id="1.20.1110.10:FF:000095">
    <property type="entry name" value="Sodium/potassium-transporting ATPase subunit alpha-1"/>
    <property type="match status" value="1"/>
</dbReference>
<dbReference type="Gene3D" id="3.40.1110.10">
    <property type="entry name" value="Calcium-transporting ATPase, cytoplasmic domain N"/>
    <property type="match status" value="1"/>
</dbReference>
<dbReference type="Gene3D" id="2.70.150.10">
    <property type="entry name" value="Calcium-transporting ATPase, cytoplasmic transduction domain A"/>
    <property type="match status" value="1"/>
</dbReference>
<dbReference type="Gene3D" id="1.20.1110.10">
    <property type="entry name" value="Calcium-transporting ATPase, transmembrane domain"/>
    <property type="match status" value="1"/>
</dbReference>
<dbReference type="Gene3D" id="3.40.50.1000">
    <property type="entry name" value="HAD superfamily/HAD-like"/>
    <property type="match status" value="1"/>
</dbReference>
<dbReference type="InterPro" id="IPR006068">
    <property type="entry name" value="ATPase_P-typ_cation-transptr_C"/>
</dbReference>
<dbReference type="InterPro" id="IPR004014">
    <property type="entry name" value="ATPase_P-typ_cation-transptr_N"/>
</dbReference>
<dbReference type="InterPro" id="IPR023299">
    <property type="entry name" value="ATPase_P-typ_cyto_dom_N"/>
</dbReference>
<dbReference type="InterPro" id="IPR018303">
    <property type="entry name" value="ATPase_P-typ_P_site"/>
</dbReference>
<dbReference type="InterPro" id="IPR023298">
    <property type="entry name" value="ATPase_P-typ_TM_dom_sf"/>
</dbReference>
<dbReference type="InterPro" id="IPR008250">
    <property type="entry name" value="ATPase_P-typ_transduc_dom_A_sf"/>
</dbReference>
<dbReference type="InterPro" id="IPR050510">
    <property type="entry name" value="Cation_transp_ATPase_P-type"/>
</dbReference>
<dbReference type="InterPro" id="IPR036412">
    <property type="entry name" value="HAD-like_sf"/>
</dbReference>
<dbReference type="InterPro" id="IPR023214">
    <property type="entry name" value="HAD_sf"/>
</dbReference>
<dbReference type="InterPro" id="IPR005775">
    <property type="entry name" value="P-type_ATPase_IIC"/>
</dbReference>
<dbReference type="InterPro" id="IPR001757">
    <property type="entry name" value="P_typ_ATPase"/>
</dbReference>
<dbReference type="InterPro" id="IPR044492">
    <property type="entry name" value="P_typ_ATPase_HD_dom"/>
</dbReference>
<dbReference type="NCBIfam" id="TIGR01106">
    <property type="entry name" value="ATPase-IIC_X-K"/>
    <property type="match status" value="1"/>
</dbReference>
<dbReference type="NCBIfam" id="TIGR01494">
    <property type="entry name" value="ATPase_P-type"/>
    <property type="match status" value="2"/>
</dbReference>
<dbReference type="PANTHER" id="PTHR43294">
    <property type="entry name" value="SODIUM/POTASSIUM-TRANSPORTING ATPASE SUBUNIT ALPHA"/>
    <property type="match status" value="1"/>
</dbReference>
<dbReference type="PANTHER" id="PTHR43294:SF13">
    <property type="entry name" value="SODIUM_POTASSIUM-TRANSPORTING ATPASE SUBUNIT ALPHA"/>
    <property type="match status" value="1"/>
</dbReference>
<dbReference type="Pfam" id="PF13246">
    <property type="entry name" value="Cation_ATPase"/>
    <property type="match status" value="1"/>
</dbReference>
<dbReference type="Pfam" id="PF00689">
    <property type="entry name" value="Cation_ATPase_C"/>
    <property type="match status" value="1"/>
</dbReference>
<dbReference type="Pfam" id="PF00690">
    <property type="entry name" value="Cation_ATPase_N"/>
    <property type="match status" value="1"/>
</dbReference>
<dbReference type="Pfam" id="PF00122">
    <property type="entry name" value="E1-E2_ATPase"/>
    <property type="match status" value="1"/>
</dbReference>
<dbReference type="Pfam" id="PF00702">
    <property type="entry name" value="Hydrolase"/>
    <property type="match status" value="1"/>
</dbReference>
<dbReference type="PRINTS" id="PR00119">
    <property type="entry name" value="CATATPASE"/>
</dbReference>
<dbReference type="PRINTS" id="PR00121">
    <property type="entry name" value="NAKATPASE"/>
</dbReference>
<dbReference type="SFLD" id="SFLDS00003">
    <property type="entry name" value="Haloacid_Dehalogenase"/>
    <property type="match status" value="1"/>
</dbReference>
<dbReference type="SFLD" id="SFLDF00027">
    <property type="entry name" value="p-type_atpase"/>
    <property type="match status" value="1"/>
</dbReference>
<dbReference type="SMART" id="SM00831">
    <property type="entry name" value="Cation_ATPase_N"/>
    <property type="match status" value="1"/>
</dbReference>
<dbReference type="SUPFAM" id="SSF81653">
    <property type="entry name" value="Calcium ATPase, transduction domain A"/>
    <property type="match status" value="1"/>
</dbReference>
<dbReference type="SUPFAM" id="SSF81665">
    <property type="entry name" value="Calcium ATPase, transmembrane domain M"/>
    <property type="match status" value="1"/>
</dbReference>
<dbReference type="SUPFAM" id="SSF56784">
    <property type="entry name" value="HAD-like"/>
    <property type="match status" value="1"/>
</dbReference>
<dbReference type="SUPFAM" id="SSF81660">
    <property type="entry name" value="Metal cation-transporting ATPase, ATP-binding domain N"/>
    <property type="match status" value="1"/>
</dbReference>
<dbReference type="PROSITE" id="PS00154">
    <property type="entry name" value="ATPASE_E1_E2"/>
    <property type="match status" value="1"/>
</dbReference>
<sequence>MALRSDYEHGRADSYRVATVIATDDDNRTADGQYKSRRKMPAKVNKKENLDDLKQELDIDFHKISPEELYQRFQTHPENGLSHAKAKENLERDGPNALTPPKQTPEWVKFCKNLFGGFAMLLWIGAILCFVAYSIQASTSEEPADDNLYLGIVLSAVVIVTGIFSYYQESKSSKIMESFKNMVPQFATVIREGEKLTLRAEDLVLGDVVEVKFGDRIPADIRIIEARNFKVDNSSLTGESEPQSRGAEFTHENPLETKNLAFFSTNAVEGTAKGVVISCGDHTVMGRIAGLASGLDTGETPIAKEIHHFIHLITGVAVFLGVTFFVIAFILGYHWLDAVIFLIGIIVANVPEGLLATVTVCLTLTAKRMASKNCLVKNLEAVETLGSTSTICSDKTGTLTQNRMTVAHMWFDNQIIEADTTEDQSGVQYDRTSPGFKALSRIATLCNRAEFKGGQDGVPILKKEVSGDASEAALLKCMELALGDVMNIRKRNKKIAEVPFNSTNKYQVSIHETEDTNDPRYLLVMKGAPERILERCSTIFINGKEKVLDEEMKEAFNNAYMELGGLGERVLGFCDFMLPSDKYPNGFKFNTDDINFPIDNLRFVGLMSMIDPPRAAVPDAVAKCRSAGIKVIMVTGDHPITAKAIAKSVGIISEGNETVEDIAQRLNIPVSEVNPREAKAAVVHGAELRDVSSDQLDEILRYHTEIVFARTSPQQKLIIVEGCQRMGAIVAVTGDGVNDSPALKKADIGVAMGIAGSDVSKQAADMILLDDNFASIVTGVEEGRLIFDNLKKSIAYTLTSNIPEISPFLAFILCDIPLPLGTVTILCIDLGTDMVPAISLAYEHAEADIMKRPPRDPFNDKLVNSRLISMAYGQIGMIQAAAGFFVYFVIMAENGFLPKKLFGIRKMWDSKAVNDLTDSYGQEWTYRDRKTLEYTCHTAFFISIVVVQWADLIICKTRRNSIFQQGMRNWALNFGLVFETVLAAFLSYCPGMEKGLRMYPLKLVWWFPAIPFALAIFIYDETRRFYLRRNPGGWLEQETYY</sequence>
<feature type="chain" id="PRO_0000046309" description="Sodium/potassium-transporting ATPase subunit alpha">
    <location>
        <begin position="1"/>
        <end position="1041"/>
    </location>
</feature>
<feature type="transmembrane region" description="Helical" evidence="2">
    <location>
        <begin position="115"/>
        <end position="135"/>
    </location>
</feature>
<feature type="transmembrane region" description="Helical" evidence="2">
    <location>
        <begin position="147"/>
        <end position="167"/>
    </location>
</feature>
<feature type="transmembrane region" description="Helical" evidence="2">
    <location>
        <begin position="312"/>
        <end position="332"/>
    </location>
</feature>
<feature type="transmembrane region" description="Helical" evidence="2">
    <location>
        <begin position="338"/>
        <end position="358"/>
    </location>
</feature>
<feature type="transmembrane region" description="Helical" evidence="2">
    <location>
        <begin position="808"/>
        <end position="828"/>
    </location>
</feature>
<feature type="transmembrane region" description="Helical" evidence="2">
    <location>
        <begin position="870"/>
        <end position="890"/>
    </location>
</feature>
<feature type="transmembrane region" description="Helical" evidence="2">
    <location>
        <begin position="935"/>
        <end position="955"/>
    </location>
</feature>
<feature type="transmembrane region" description="Helical" evidence="2">
    <location>
        <begin position="970"/>
        <end position="990"/>
    </location>
</feature>
<feature type="active site" description="4-aspartylphosphate intermediate" evidence="10">
    <location>
        <position position="394"/>
    </location>
</feature>
<feature type="binding site" evidence="1">
    <location>
        <position position="526"/>
    </location>
    <ligand>
        <name>ATP</name>
        <dbReference type="ChEBI" id="CHEBI:30616"/>
    </ligand>
</feature>
<feature type="splice variant" id="VSP_000417" description="In isoform 2, isoform 3, isoform 6 and isoform 7." evidence="8 9">
    <location>
        <begin position="1"/>
        <end position="39"/>
    </location>
</feature>
<feature type="splice variant" id="VSP_008074" description="In isoform 4." evidence="10">
    <original>MALRSDYE</original>
    <variation>MSAQ</variation>
    <location>
        <begin position="1"/>
        <end position="8"/>
    </location>
</feature>
<feature type="splice variant" id="VSP_008075" description="In isoform 5." evidence="10">
    <original>VPAISLAYEHAEADIMKRPPRDPFNDKLVNS</original>
    <variation>IPAISLAYEGPEADIMKRRPRNPEIDNLVNE</variation>
    <location>
        <begin position="835"/>
        <end position="865"/>
    </location>
</feature>
<feature type="splice variant" id="VSP_008076" description="In isoform 7." evidence="10">
    <original>VPAISLAYEHAEADIMKRPPRDPFNDKLVNS</original>
    <variation>IPAISLAYEQAESDIMKRQPRDPYRDNLVNR</variation>
    <location>
        <begin position="835"/>
        <end position="865"/>
    </location>
</feature>
<feature type="splice variant" id="VSP_008077" description="In isoform 3." evidence="8">
    <original>PAISLAYEHAEADIMKRPPRDPFNDKLVNSRLISMAYGQIGMI</original>
    <variation>SLDLCPKPKLHRRLKLKLLLSQYHSSKLYSYTSCSPSQLIVKN</variation>
    <location>
        <begin position="836"/>
        <end position="878"/>
    </location>
</feature>
<feature type="splice variant" id="VSP_000418" description="In isoform 6." evidence="10">
    <original>HAEADIMKRPPRDPFNDKLVNS</original>
    <variation>TAESDIMKRQPRNPFQDKLVNE</variation>
    <location>
        <begin position="844"/>
        <end position="865"/>
    </location>
</feature>
<feature type="splice variant" id="VSP_008078" description="In isoform 3." evidence="8">
    <location>
        <begin position="879"/>
        <end position="1041"/>
    </location>
</feature>
<feature type="sequence variant" description="In RNA edited version.">
    <original>Y</original>
    <variation>C</variation>
    <location>
        <position position="429"/>
    </location>
</feature>
<feature type="mutagenesis site" description="In allele ATP-alpha-dts2; homozygous lethal and temperature dependent bang sensitive paralysis, shortened life span and neurodegeneration when heterozygous." evidence="4">
    <original>D</original>
    <variation>N</variation>
    <location>
        <position position="1020"/>
    </location>
</feature>
<feature type="mutagenesis site" description="In allele ATP-alpha-dts1; homozygous lethal and temperature dependent bang sensitive paralysis, shortened life span and neurodegeneration when heterozygous." evidence="4">
    <original>E</original>
    <variation>K</variation>
    <location>
        <position position="1021"/>
    </location>
</feature>
<feature type="sequence conflict" description="In Ref. 1; CAA32638." evidence="10" ref="1">
    <original>L</original>
    <variation>M</variation>
    <location>
        <position position="69"/>
    </location>
</feature>
<feature type="sequence conflict" description="In Ref. 1; CAA32638." evidence="10" ref="1">
    <original>K</original>
    <variation>R</variation>
    <location>
        <position position="85"/>
    </location>
</feature>
<feature type="sequence conflict" description="In Ref. 1; CAA32638." evidence="10" ref="1">
    <location>
        <position position="97"/>
    </location>
</feature>
<feature type="sequence conflict" description="In Ref. 1; CAA32638." evidence="10" ref="1">
    <original>KN</original>
    <variation>ED</variation>
    <location>
        <begin position="112"/>
        <end position="113"/>
    </location>
</feature>
<feature type="sequence conflict" description="In Ref. 1; CAA32638." evidence="10" ref="1">
    <original>GF</original>
    <variation>V</variation>
    <location>
        <begin position="117"/>
        <end position="118"/>
    </location>
</feature>
<feature type="sequence conflict" description="In Ref. 1; CAA32638." evidence="10" ref="1">
    <original>I</original>
    <variation>V</variation>
    <location>
        <position position="163"/>
    </location>
</feature>
<feature type="sequence conflict" description="In Ref. 2; AAC05260." evidence="10" ref="2">
    <original>E</original>
    <variation>G</variation>
    <location>
        <position position="192"/>
    </location>
</feature>
<feature type="sequence conflict" description="In Ref. 1; CAA32638." evidence="10" ref="1">
    <original>LT</original>
    <variation>PS</variation>
    <location>
        <begin position="196"/>
        <end position="197"/>
    </location>
</feature>
<feature type="sequence conflict" description="In Ref. 1; CAA32638." evidence="10" ref="1">
    <original>DV</original>
    <variation>VL</variation>
    <location>
        <begin position="207"/>
        <end position="208"/>
    </location>
</feature>
<feature type="sequence conflict" description="In Ref. 1; CAA32638." evidence="10" ref="1">
    <original>VK</original>
    <variation>LE</variation>
    <location>
        <begin position="211"/>
        <end position="212"/>
    </location>
</feature>
<feature type="sequence conflict" description="In Ref. 1; CAA32638." evidence="10" ref="1">
    <original>RIPADI</original>
    <variation>LIPLVY</variation>
    <location>
        <begin position="216"/>
        <end position="221"/>
    </location>
</feature>
<feature type="sequence conflict" description="In Ref. 1; CAA32638." evidence="10" ref="1">
    <original>N</original>
    <variation>D</variation>
    <location>
        <position position="228"/>
    </location>
</feature>
<feature type="sequence conflict" description="In Ref. 1; CAA32638." evidence="10" ref="1">
    <original>GTA</original>
    <variation>ALP</variation>
    <location>
        <begin position="270"/>
        <end position="272"/>
    </location>
</feature>
<feature type="sequence conflict" description="In Ref. 1; CAA32638." evidence="10" ref="1">
    <original>G</original>
    <variation>A</variation>
    <location>
        <position position="290"/>
    </location>
</feature>
<feature type="sequence conflict" description="In Ref. 1; CAA32638." evidence="10" ref="1">
    <location>
        <position position="299"/>
    </location>
</feature>
<feature type="sequence conflict" description="In Ref. 8; CAA35504." evidence="10" ref="8">
    <original>N</original>
    <variation>T</variation>
    <location>
        <position position="402"/>
    </location>
</feature>
<feature type="sequence conflict" description="In Ref. 8; CAA35504." evidence="10" ref="8">
    <original>I</original>
    <variation>N</variation>
    <location>
        <position position="488"/>
    </location>
</feature>
<feature type="sequence conflict" description="In Ref. 1; CAA32638." evidence="10" ref="1">
    <original>F</original>
    <variation>S</variation>
    <location>
        <position position="811"/>
    </location>
</feature>
<feature type="sequence conflict" description="In Ref. 1; CAA32638." evidence="10" ref="1">
    <original>E</original>
    <variation>D</variation>
    <location>
        <position position="843"/>
    </location>
</feature>
<comment type="function">
    <text evidence="4 6 7">This is the catalytic component of the active enzyme, which catalyzes the hydrolysis of ATP coupled with the exchange of sodium and potassium ions across the plasma membrane. This action creates the electrochemical gradient of sodium and potassium ions, providing the energy for active transport of various nutrients.</text>
</comment>
<comment type="catalytic activity">
    <reaction evidence="11">
        <text>K(+)(out) + Na(+)(in) + ATP + H2O = K(+)(in) + Na(+)(out) + ADP + phosphate + H(+)</text>
        <dbReference type="Rhea" id="RHEA:18353"/>
        <dbReference type="ChEBI" id="CHEBI:15377"/>
        <dbReference type="ChEBI" id="CHEBI:15378"/>
        <dbReference type="ChEBI" id="CHEBI:29101"/>
        <dbReference type="ChEBI" id="CHEBI:29103"/>
        <dbReference type="ChEBI" id="CHEBI:30616"/>
        <dbReference type="ChEBI" id="CHEBI:43474"/>
        <dbReference type="ChEBI" id="CHEBI:456216"/>
        <dbReference type="EC" id="7.2.2.13"/>
    </reaction>
    <physiologicalReaction direction="left-to-right" evidence="11">
        <dbReference type="Rhea" id="RHEA:18354"/>
    </physiologicalReaction>
</comment>
<comment type="subunit">
    <text evidence="10">The sodium/potassium-transporting ATPase is composed of a catalytic alpha subunit, an auxiliary non-catalytic beta subunit and an additional regulatory subunit.</text>
</comment>
<comment type="subcellular location">
    <subcellularLocation>
        <location evidence="10">Cell membrane</location>
        <topology>Multi-pass membrane protein</topology>
    </subcellularLocation>
</comment>
<comment type="alternative products">
    <event type="alternative splicing"/>
    <isoform>
        <id>P13607-1</id>
        <name>1</name>
        <name>A</name>
        <sequence type="displayed"/>
    </isoform>
    <isoform>
        <id>P13607-2</id>
        <name>2</name>
        <name>B</name>
        <name>C</name>
        <name>E</name>
        <sequence type="described" ref="VSP_000417"/>
    </isoform>
    <isoform>
        <id>P13607-3</id>
        <name>3</name>
        <name>D</name>
        <sequence type="described" ref="VSP_000417 VSP_008077 VSP_008078"/>
    </isoform>
    <isoform>
        <id>P13607-4</id>
        <name>4</name>
        <sequence type="described" ref="VSP_008074"/>
    </isoform>
    <isoform>
        <id>P13607-5</id>
        <name>5</name>
        <sequence type="described" ref="VSP_008075"/>
    </isoform>
    <isoform>
        <id>P13607-6</id>
        <name>6</name>
        <name>F</name>
        <name>H</name>
        <sequence type="described" ref="VSP_000417 VSP_000418"/>
    </isoform>
    <isoform>
        <id>P13607-7</id>
        <name>7</name>
        <name>G</name>
        <sequence type="described" ref="VSP_000417 VSP_008076"/>
    </isoform>
    <text>Exon 6 has 4 mutually exclusive forms (6a, 6b, 6c and 6d). Additional isoforms may exist.</text>
</comment>
<comment type="tissue specificity">
    <text evidence="6 7">High levels are found in some adult tissues: Malpighian tubules, indirect flight muscles, tubular leg muscles and throughout the nervous system (brain, optic lobes, retina and ventral thoracic neuromere). Lower levels are detected at the posterior end where the reproductive organs and rectum are located.</text>
</comment>
<comment type="RNA editing">
    <location>
        <position position="429" evidence="3 5"/>
    </location>
    <text>Partially edited. Target of Adar.</text>
</comment>
<comment type="miscellaneous">
    <text>Ouabain-sensitive electrogenic ion pump.</text>
</comment>
<comment type="similarity">
    <text evidence="10">Belongs to the cation transport ATPase (P-type) (TC 3.A.3) family. Type IIC subfamily.</text>
</comment>
<keyword id="KW-0025">Alternative splicing</keyword>
<keyword id="KW-0067">ATP-binding</keyword>
<keyword id="KW-1003">Cell membrane</keyword>
<keyword id="KW-0406">Ion transport</keyword>
<keyword id="KW-0472">Membrane</keyword>
<keyword id="KW-0547">Nucleotide-binding</keyword>
<keyword id="KW-0597">Phosphoprotein</keyword>
<keyword id="KW-0630">Potassium</keyword>
<keyword id="KW-0633">Potassium transport</keyword>
<keyword id="KW-1185">Reference proteome</keyword>
<keyword id="KW-0691">RNA editing</keyword>
<keyword id="KW-0915">Sodium</keyword>
<keyword id="KW-0739">Sodium transport</keyword>
<keyword id="KW-0740">Sodium/potassium transport</keyword>
<keyword id="KW-1278">Translocase</keyword>
<keyword id="KW-0812">Transmembrane</keyword>
<keyword id="KW-1133">Transmembrane helix</keyword>
<keyword id="KW-0813">Transport</keyword>
<name>ATNA_DROME</name>
<evidence type="ECO:0000250" key="1"/>
<evidence type="ECO:0000255" key="2"/>
<evidence type="ECO:0000269" key="3">
    <source>
    </source>
</evidence>
<evidence type="ECO:0000269" key="4">
    <source>
    </source>
</evidence>
<evidence type="ECO:0000269" key="5">
    <source>
    </source>
</evidence>
<evidence type="ECO:0000269" key="6">
    <source>
    </source>
</evidence>
<evidence type="ECO:0000269" key="7">
    <source>
    </source>
</evidence>
<evidence type="ECO:0000303" key="8">
    <source>
    </source>
</evidence>
<evidence type="ECO:0000303" key="9">
    <source>
    </source>
</evidence>
<evidence type="ECO:0000305" key="10"/>
<evidence type="ECO:0000305" key="11">
    <source>
    </source>
</evidence>
<proteinExistence type="evidence at protein level"/>
<organism>
    <name type="scientific">Drosophila melanogaster</name>
    <name type="common">Fruit fly</name>
    <dbReference type="NCBI Taxonomy" id="7227"/>
    <lineage>
        <taxon>Eukaryota</taxon>
        <taxon>Metazoa</taxon>
        <taxon>Ecdysozoa</taxon>
        <taxon>Arthropoda</taxon>
        <taxon>Hexapoda</taxon>
        <taxon>Insecta</taxon>
        <taxon>Pterygota</taxon>
        <taxon>Neoptera</taxon>
        <taxon>Endopterygota</taxon>
        <taxon>Diptera</taxon>
        <taxon>Brachycera</taxon>
        <taxon>Muscomorpha</taxon>
        <taxon>Ephydroidea</taxon>
        <taxon>Drosophilidae</taxon>
        <taxon>Drosophila</taxon>
        <taxon>Sophophora</taxon>
    </lineage>
</organism>